<accession>Q9C5W0</accession>
<accession>A0A2H1ZED4</accession>
<accession>Q0WTD3</accession>
<accession>Q84MB9</accession>
<accession>Q9SX63</accession>
<sequence>MEVSGVVLRQIPCVSSGSVAGLRLVSEFSGNTRTVGFRTRRFRGIVCNNEFADKGHVNYYIEPTRCGEEKEKVKVMEKEKKALKKKAKVLKSLSKNLDMFSSIGFGLDPEAGLVGEIQTKTISEATEILVKQLEQLKAEEKILKKQRKEEKAKAKAMKKMTEMDSESSSSSESSDSDCDKGKVVDMSSLRNKAKPVLEPLQPEATVATLPRIQEDAISCKNTSEALQIALQTSTIFPSMANPGQTLKTVEAVSVVGLPLNRVEVCMGGKCKRSGGALLLDEFQRAMTGFEGSAVACKCMGKCRDGPNVRVVKETDAVMTDSVRTPSKTLCVGVGLQDVETIVTSFFDEECSREGLGSVSY</sequence>
<organism>
    <name type="scientific">Arabidopsis thaliana</name>
    <name type="common">Mouse-ear cress</name>
    <dbReference type="NCBI Taxonomy" id="3702"/>
    <lineage>
        <taxon>Eukaryota</taxon>
        <taxon>Viridiplantae</taxon>
        <taxon>Streptophyta</taxon>
        <taxon>Embryophyta</taxon>
        <taxon>Tracheophyta</taxon>
        <taxon>Spermatophyta</taxon>
        <taxon>Magnoliopsida</taxon>
        <taxon>eudicotyledons</taxon>
        <taxon>Gunneridae</taxon>
        <taxon>Pentapetalae</taxon>
        <taxon>rosids</taxon>
        <taxon>malvids</taxon>
        <taxon>Brassicales</taxon>
        <taxon>Brassicaceae</taxon>
        <taxon>Camelineae</taxon>
        <taxon>Arabidopsis</taxon>
    </lineage>
</organism>
<gene>
    <name evidence="4" type="primary">DGAT3</name>
    <name evidence="8" type="ordered locus">At1g48300</name>
    <name evidence="9" type="ORF">F11A17.15</name>
</gene>
<protein>
    <recommendedName>
        <fullName evidence="5">Diacylglycerol O-acyltransferase 3</fullName>
        <shortName evidence="4">AtDGAT3</shortName>
        <ecNumber evidence="3 6">2.3.1.20</ecNumber>
    </recommendedName>
</protein>
<dbReference type="EC" id="2.3.1.20" evidence="3 6"/>
<dbReference type="EMBL" id="AC007932">
    <property type="protein sequence ID" value="AAD49767.1"/>
    <property type="molecule type" value="Genomic_DNA"/>
</dbReference>
<dbReference type="EMBL" id="CP002684">
    <property type="protein sequence ID" value="AEE32272.2"/>
    <property type="molecule type" value="Genomic_DNA"/>
</dbReference>
<dbReference type="EMBL" id="AF344322">
    <property type="protein sequence ID" value="AAK06873.1"/>
    <property type="molecule type" value="mRNA"/>
</dbReference>
<dbReference type="EMBL" id="BT006415">
    <property type="protein sequence ID" value="AAP21223.1"/>
    <property type="molecule type" value="mRNA"/>
</dbReference>
<dbReference type="EMBL" id="AK227624">
    <property type="protein sequence ID" value="BAE99615.1"/>
    <property type="molecule type" value="mRNA"/>
</dbReference>
<dbReference type="PIR" id="H96522">
    <property type="entry name" value="H96522"/>
</dbReference>
<dbReference type="RefSeq" id="NP_175264.3">
    <property type="nucleotide sequence ID" value="NM_103727.5"/>
</dbReference>
<dbReference type="SMR" id="Q9C5W0"/>
<dbReference type="FunCoup" id="Q9C5W0">
    <property type="interactions" value="118"/>
</dbReference>
<dbReference type="STRING" id="3702.Q9C5W0"/>
<dbReference type="PaxDb" id="3702-AT1G48300.1"/>
<dbReference type="ProteomicsDB" id="201587"/>
<dbReference type="ProteomicsDB" id="224656"/>
<dbReference type="EnsemblPlants" id="AT1G48300.1">
    <property type="protein sequence ID" value="AT1G48300.1"/>
    <property type="gene ID" value="AT1G48300"/>
</dbReference>
<dbReference type="GeneID" id="841250"/>
<dbReference type="Gramene" id="AT1G48300.1">
    <property type="protein sequence ID" value="AT1G48300.1"/>
    <property type="gene ID" value="AT1G48300"/>
</dbReference>
<dbReference type="KEGG" id="ath:AT1G48300"/>
<dbReference type="Araport" id="AT1G48300"/>
<dbReference type="TAIR" id="AT1G48300">
    <property type="gene designation" value="DGAT3"/>
</dbReference>
<dbReference type="eggNOG" id="ENOG502RS12">
    <property type="taxonomic scope" value="Eukaryota"/>
</dbReference>
<dbReference type="HOGENOM" id="CLU_065888_0_0_1"/>
<dbReference type="InParanoid" id="Q9C5W0"/>
<dbReference type="OMA" id="AVACKCM"/>
<dbReference type="BRENDA" id="2.3.1.20">
    <property type="organism ID" value="399"/>
</dbReference>
<dbReference type="UniPathway" id="UPA00282"/>
<dbReference type="PRO" id="PR:Q9C5W0"/>
<dbReference type="Proteomes" id="UP000006548">
    <property type="component" value="Chromosome 1"/>
</dbReference>
<dbReference type="ExpressionAtlas" id="Q9C5W0">
    <property type="expression patterns" value="baseline and differential"/>
</dbReference>
<dbReference type="GO" id="GO:0005829">
    <property type="term" value="C:cytosol"/>
    <property type="evidence" value="ECO:0000314"/>
    <property type="project" value="TAIR"/>
</dbReference>
<dbReference type="GO" id="GO:0051537">
    <property type="term" value="F:2 iron, 2 sulfur cluster binding"/>
    <property type="evidence" value="ECO:0007669"/>
    <property type="project" value="UniProtKB-KW"/>
</dbReference>
<dbReference type="GO" id="GO:0004144">
    <property type="term" value="F:diacylglycerol O-acyltransferase activity"/>
    <property type="evidence" value="ECO:0000314"/>
    <property type="project" value="TAIR"/>
</dbReference>
<dbReference type="GO" id="GO:0046872">
    <property type="term" value="F:metal ion binding"/>
    <property type="evidence" value="ECO:0007669"/>
    <property type="project" value="UniProtKB-KW"/>
</dbReference>
<dbReference type="GO" id="GO:0006071">
    <property type="term" value="P:glycerol metabolic process"/>
    <property type="evidence" value="ECO:0007669"/>
    <property type="project" value="UniProtKB-KW"/>
</dbReference>
<dbReference type="GO" id="GO:0019432">
    <property type="term" value="P:triglyceride biosynthetic process"/>
    <property type="evidence" value="ECO:0000315"/>
    <property type="project" value="TAIR"/>
</dbReference>
<dbReference type="CDD" id="cd02980">
    <property type="entry name" value="TRX_Fd_family"/>
    <property type="match status" value="1"/>
</dbReference>
<dbReference type="Gene3D" id="3.40.30.10">
    <property type="entry name" value="Glutaredoxin"/>
    <property type="match status" value="1"/>
</dbReference>
<dbReference type="InterPro" id="IPR036249">
    <property type="entry name" value="Thioredoxin-like_sf"/>
</dbReference>
<dbReference type="SUPFAM" id="SSF52833">
    <property type="entry name" value="Thioredoxin-like"/>
    <property type="match status" value="1"/>
</dbReference>
<comment type="function">
    <text evidence="2 3">Involved in triacylglycerol (TAG) biosynthesis (PubMed:22760209, PubMed:30467384). Catalyzes the acylation of the sn-3 hydroxy group of sn-1,2-diacylglycerol using acyl-CoA (PubMed:22760209, PubMed:30467384). May preferentially use linolenoyl-CoA as substrate and to a lesser extent linoleoyl-CoA (PubMed:22760209). May contribute to the active recycling of linoleate and linolenate into TAG when seed oil breakdown is blocked (PubMed:22760209).</text>
</comment>
<comment type="catalytic activity">
    <reaction evidence="3 6">
        <text>an acyl-CoA + a 1,2-diacyl-sn-glycerol = a triacyl-sn-glycerol + CoA</text>
        <dbReference type="Rhea" id="RHEA:10868"/>
        <dbReference type="ChEBI" id="CHEBI:17815"/>
        <dbReference type="ChEBI" id="CHEBI:57287"/>
        <dbReference type="ChEBI" id="CHEBI:58342"/>
        <dbReference type="ChEBI" id="CHEBI:64615"/>
        <dbReference type="EC" id="2.3.1.20"/>
    </reaction>
</comment>
<comment type="cofactor">
    <cofactor evidence="3">
        <name>[2Fe-2S] cluster</name>
        <dbReference type="ChEBI" id="CHEBI:190135"/>
    </cofactor>
</comment>
<comment type="pathway">
    <text evidence="5">Glycerolipid metabolism; triacylglycerol biosynthesis.</text>
</comment>
<comment type="developmental stage">
    <text evidence="3">Expressed in germinating seeds 48 hours after exposure to the light, just after the emergence of the radicle.</text>
</comment>
<comment type="disruption phenotype">
    <text evidence="2">No visible phenotype under normal growth conditions.</text>
</comment>
<comment type="similarity">
    <text evidence="5">Belongs to the diacylglycerol acyltransferase family.</text>
</comment>
<comment type="caution">
    <text evidence="2 5">The subcellular localization of a truncated sequence of DGAT3, lacking AA 1-75, has been shown to be cytosolic (PubMed:22760209). However, the N-terminus of the full-length protein is predicted to contain a transit peptide for chloroplast targeting. Therefore, the localization of DGAT3 is unsure.</text>
</comment>
<keyword id="KW-0001">2Fe-2S</keyword>
<keyword id="KW-0012">Acyltransferase</keyword>
<keyword id="KW-0319">Glycerol metabolism</keyword>
<keyword id="KW-0408">Iron</keyword>
<keyword id="KW-0411">Iron-sulfur</keyword>
<keyword id="KW-0444">Lipid biosynthesis</keyword>
<keyword id="KW-0443">Lipid metabolism</keyword>
<keyword id="KW-0479">Metal-binding</keyword>
<keyword id="KW-1185">Reference proteome</keyword>
<keyword id="KW-0808">Transferase</keyword>
<proteinExistence type="evidence at protein level"/>
<name>DGAT3_ARATH</name>
<evidence type="ECO:0000256" key="1">
    <source>
        <dbReference type="SAM" id="MobiDB-lite"/>
    </source>
</evidence>
<evidence type="ECO:0000269" key="2">
    <source>
    </source>
</evidence>
<evidence type="ECO:0000269" key="3">
    <source>
    </source>
</evidence>
<evidence type="ECO:0000303" key="4">
    <source>
    </source>
</evidence>
<evidence type="ECO:0000305" key="5"/>
<evidence type="ECO:0000305" key="6">
    <source>
    </source>
</evidence>
<evidence type="ECO:0000305" key="7">
    <source>
    </source>
</evidence>
<evidence type="ECO:0000312" key="8">
    <source>
        <dbReference type="Araport" id="AT1G48300"/>
    </source>
</evidence>
<evidence type="ECO:0000312" key="9">
    <source>
        <dbReference type="EMBL" id="AAD49767.1"/>
    </source>
</evidence>
<reference key="1">
    <citation type="journal article" date="2000" name="Nature">
        <title>Sequence and analysis of chromosome 1 of the plant Arabidopsis thaliana.</title>
        <authorList>
            <person name="Theologis A."/>
            <person name="Ecker J.R."/>
            <person name="Palm C.J."/>
            <person name="Federspiel N.A."/>
            <person name="Kaul S."/>
            <person name="White O."/>
            <person name="Alonso J."/>
            <person name="Altafi H."/>
            <person name="Araujo R."/>
            <person name="Bowman C.L."/>
            <person name="Brooks S.Y."/>
            <person name="Buehler E."/>
            <person name="Chan A."/>
            <person name="Chao Q."/>
            <person name="Chen H."/>
            <person name="Cheuk R.F."/>
            <person name="Chin C.W."/>
            <person name="Chung M.K."/>
            <person name="Conn L."/>
            <person name="Conway A.B."/>
            <person name="Conway A.R."/>
            <person name="Creasy T.H."/>
            <person name="Dewar K."/>
            <person name="Dunn P."/>
            <person name="Etgu P."/>
            <person name="Feldblyum T.V."/>
            <person name="Feng J.-D."/>
            <person name="Fong B."/>
            <person name="Fujii C.Y."/>
            <person name="Gill J.E."/>
            <person name="Goldsmith A.D."/>
            <person name="Haas B."/>
            <person name="Hansen N.F."/>
            <person name="Hughes B."/>
            <person name="Huizar L."/>
            <person name="Hunter J.L."/>
            <person name="Jenkins J."/>
            <person name="Johnson-Hopson C."/>
            <person name="Khan S."/>
            <person name="Khaykin E."/>
            <person name="Kim C.J."/>
            <person name="Koo H.L."/>
            <person name="Kremenetskaia I."/>
            <person name="Kurtz D.B."/>
            <person name="Kwan A."/>
            <person name="Lam B."/>
            <person name="Langin-Hooper S."/>
            <person name="Lee A."/>
            <person name="Lee J.M."/>
            <person name="Lenz C.A."/>
            <person name="Li J.H."/>
            <person name="Li Y.-P."/>
            <person name="Lin X."/>
            <person name="Liu S.X."/>
            <person name="Liu Z.A."/>
            <person name="Luros J.S."/>
            <person name="Maiti R."/>
            <person name="Marziali A."/>
            <person name="Militscher J."/>
            <person name="Miranda M."/>
            <person name="Nguyen M."/>
            <person name="Nierman W.C."/>
            <person name="Osborne B.I."/>
            <person name="Pai G."/>
            <person name="Peterson J."/>
            <person name="Pham P.K."/>
            <person name="Rizzo M."/>
            <person name="Rooney T."/>
            <person name="Rowley D."/>
            <person name="Sakano H."/>
            <person name="Salzberg S.L."/>
            <person name="Schwartz J.R."/>
            <person name="Shinn P."/>
            <person name="Southwick A.M."/>
            <person name="Sun H."/>
            <person name="Tallon L.J."/>
            <person name="Tambunga G."/>
            <person name="Toriumi M.J."/>
            <person name="Town C.D."/>
            <person name="Utterback T."/>
            <person name="Van Aken S."/>
            <person name="Vaysberg M."/>
            <person name="Vysotskaia V.S."/>
            <person name="Walker M."/>
            <person name="Wu D."/>
            <person name="Yu G."/>
            <person name="Fraser C.M."/>
            <person name="Venter J.C."/>
            <person name="Davis R.W."/>
        </authorList>
    </citation>
    <scope>NUCLEOTIDE SEQUENCE [LARGE SCALE GENOMIC DNA]</scope>
    <source>
        <strain>cv. Columbia</strain>
    </source>
</reference>
<reference key="2">
    <citation type="journal article" date="2017" name="Plant J.">
        <title>Araport11: a complete reannotation of the Arabidopsis thaliana reference genome.</title>
        <authorList>
            <person name="Cheng C.Y."/>
            <person name="Krishnakumar V."/>
            <person name="Chan A.P."/>
            <person name="Thibaud-Nissen F."/>
            <person name="Schobel S."/>
            <person name="Town C.D."/>
        </authorList>
    </citation>
    <scope>GENOME REANNOTATION</scope>
    <source>
        <strain>cv. Columbia</strain>
    </source>
</reference>
<reference key="3">
    <citation type="journal article" date="2003" name="Science">
        <title>Empirical analysis of transcriptional activity in the Arabidopsis genome.</title>
        <authorList>
            <person name="Yamada K."/>
            <person name="Lim J."/>
            <person name="Dale J.M."/>
            <person name="Chen H."/>
            <person name="Shinn P."/>
            <person name="Palm C.J."/>
            <person name="Southwick A.M."/>
            <person name="Wu H.C."/>
            <person name="Kim C.J."/>
            <person name="Nguyen M."/>
            <person name="Pham P.K."/>
            <person name="Cheuk R.F."/>
            <person name="Karlin-Newmann G."/>
            <person name="Liu S.X."/>
            <person name="Lam B."/>
            <person name="Sakano H."/>
            <person name="Wu T."/>
            <person name="Yu G."/>
            <person name="Miranda M."/>
            <person name="Quach H.L."/>
            <person name="Tripp M."/>
            <person name="Chang C.H."/>
            <person name="Lee J.M."/>
            <person name="Toriumi M.J."/>
            <person name="Chan M.M."/>
            <person name="Tang C.C."/>
            <person name="Onodera C.S."/>
            <person name="Deng J.M."/>
            <person name="Akiyama K."/>
            <person name="Ansari Y."/>
            <person name="Arakawa T."/>
            <person name="Banh J."/>
            <person name="Banno F."/>
            <person name="Bowser L."/>
            <person name="Brooks S.Y."/>
            <person name="Carninci P."/>
            <person name="Chao Q."/>
            <person name="Choy N."/>
            <person name="Enju A."/>
            <person name="Goldsmith A.D."/>
            <person name="Gurjal M."/>
            <person name="Hansen N.F."/>
            <person name="Hayashizaki Y."/>
            <person name="Johnson-Hopson C."/>
            <person name="Hsuan V.W."/>
            <person name="Iida K."/>
            <person name="Karnes M."/>
            <person name="Khan S."/>
            <person name="Koesema E."/>
            <person name="Ishida J."/>
            <person name="Jiang P.X."/>
            <person name="Jones T."/>
            <person name="Kawai J."/>
            <person name="Kamiya A."/>
            <person name="Meyers C."/>
            <person name="Nakajima M."/>
            <person name="Narusaka M."/>
            <person name="Seki M."/>
            <person name="Sakurai T."/>
            <person name="Satou M."/>
            <person name="Tamse R."/>
            <person name="Vaysberg M."/>
            <person name="Wallender E.K."/>
            <person name="Wong C."/>
            <person name="Yamamura Y."/>
            <person name="Yuan S."/>
            <person name="Shinozaki K."/>
            <person name="Davis R.W."/>
            <person name="Theologis A."/>
            <person name="Ecker J.R."/>
        </authorList>
    </citation>
    <scope>NUCLEOTIDE SEQUENCE [LARGE SCALE MRNA] OF 76-360 AND 157-360</scope>
    <source>
        <strain>cv. Columbia</strain>
    </source>
</reference>
<reference key="4">
    <citation type="submission" date="2006-07" db="EMBL/GenBank/DDBJ databases">
        <title>Large-scale analysis of RIKEN Arabidopsis full-length (RAFL) cDNAs.</title>
        <authorList>
            <person name="Totoki Y."/>
            <person name="Seki M."/>
            <person name="Ishida J."/>
            <person name="Nakajima M."/>
            <person name="Enju A."/>
            <person name="Kamiya A."/>
            <person name="Narusaka M."/>
            <person name="Shin-i T."/>
            <person name="Nakagawa M."/>
            <person name="Sakamoto N."/>
            <person name="Oishi K."/>
            <person name="Kohara Y."/>
            <person name="Kobayashi M."/>
            <person name="Toyoda A."/>
            <person name="Sakaki Y."/>
            <person name="Sakurai T."/>
            <person name="Iida K."/>
            <person name="Akiyama K."/>
            <person name="Satou M."/>
            <person name="Toyoda T."/>
            <person name="Konagaya A."/>
            <person name="Carninci P."/>
            <person name="Kawai J."/>
            <person name="Hayashizaki Y."/>
            <person name="Shinozaki K."/>
        </authorList>
    </citation>
    <scope>NUCLEOTIDE SEQUENCE [LARGE SCALE MRNA] OF 115-360</scope>
    <source>
        <strain>cv. Columbia</strain>
    </source>
</reference>
<reference key="5">
    <citation type="journal article" date="2012" name="Plant Physiol.">
        <title>A cytosolic acyltransferase contributes to triacylglycerol synthesis in sucrose-rescued Arabidopsis seed oil catabolism mutants.</title>
        <authorList>
            <person name="Hernandez M.L."/>
            <person name="Whitehead L."/>
            <person name="He Z."/>
            <person name="Gazda V."/>
            <person name="Gilday A."/>
            <person name="Kozhevnikova E."/>
            <person name="Vaistij F.E."/>
            <person name="Larson T.R."/>
            <person name="Graham I.A."/>
        </authorList>
    </citation>
    <scope>FUNCTION</scope>
    <scope>CATALYTIC ACTIVITY</scope>
    <scope>DISRUPTION PHENOTYPE</scope>
</reference>
<reference key="6">
    <citation type="journal article" date="2018" name="Sci. Rep.">
        <title>Arabidopsis thaliana DGAT3 is a [2Fe-2S] protein involved in TAG biosynthesis.</title>
        <authorList>
            <person name="Ayme L."/>
            <person name="Arragain S."/>
            <person name="Canonge M."/>
            <person name="Baud S."/>
            <person name="Touati N."/>
            <person name="Bimai O."/>
            <person name="Jagic F."/>
            <person name="Louis-Mondesir C."/>
            <person name="Briozzo P."/>
            <person name="Fontecave M."/>
            <person name="Chardot T."/>
        </authorList>
    </citation>
    <scope>FUNCTION</scope>
    <scope>CATALYTIC ACTIVITY</scope>
    <scope>COFACTOR</scope>
    <scope>DEVELOPMENTAL STAGE</scope>
</reference>
<feature type="chain" id="PRO_0000438912" description="Diacylglycerol O-acyltransferase 3">
    <location>
        <begin position="1"/>
        <end position="360"/>
    </location>
</feature>
<feature type="region of interest" description="Disordered" evidence="1">
    <location>
        <begin position="153"/>
        <end position="182"/>
    </location>
</feature>
<feature type="binding site" evidence="7">
    <location>
        <position position="265"/>
    </location>
    <ligand>
        <name>[2Fe-2S] cluster</name>
        <dbReference type="ChEBI" id="CHEBI:190135"/>
    </ligand>
</feature>
<feature type="binding site" evidence="7">
    <location>
        <position position="270"/>
    </location>
    <ligand>
        <name>[2Fe-2S] cluster</name>
        <dbReference type="ChEBI" id="CHEBI:190135"/>
    </ligand>
</feature>
<feature type="binding site" evidence="7">
    <location>
        <position position="298"/>
    </location>
    <ligand>
        <name>[2Fe-2S] cluster</name>
        <dbReference type="ChEBI" id="CHEBI:190135"/>
    </ligand>
</feature>
<feature type="binding site" evidence="7">
    <location>
        <position position="302"/>
    </location>
    <ligand>
        <name>[2Fe-2S] cluster</name>
        <dbReference type="ChEBI" id="CHEBI:190135"/>
    </ligand>
</feature>